<name>FRAS1_HUMAN</name>
<accession>Q86XX4</accession>
<accession>A2RRR8</accession>
<accession>Q86UZ4</accession>
<accession>Q8N3U9</accession>
<accession>Q8NAU7</accession>
<accession>Q96JW7</accession>
<accession>Q9H6N9</accession>
<accession>Q9P228</accession>
<dbReference type="EMBL" id="AJ512501">
    <property type="protein sequence ID" value="CAD54734.1"/>
    <property type="molecule type" value="Genomic_DNA"/>
</dbReference>
<dbReference type="EMBL" id="AC093652">
    <property type="status" value="NOT_ANNOTATED_CDS"/>
    <property type="molecule type" value="Genomic_DNA"/>
</dbReference>
<dbReference type="EMBL" id="AC093886">
    <property type="status" value="NOT_ANNOTATED_CDS"/>
    <property type="molecule type" value="Genomic_DNA"/>
</dbReference>
<dbReference type="EMBL" id="AC093897">
    <property type="status" value="NOT_ANNOTATED_CDS"/>
    <property type="molecule type" value="Genomic_DNA"/>
</dbReference>
<dbReference type="EMBL" id="AC104808">
    <property type="status" value="NOT_ANNOTATED_CDS"/>
    <property type="molecule type" value="Genomic_DNA"/>
</dbReference>
<dbReference type="EMBL" id="AC131945">
    <property type="status" value="NOT_ANNOTATED_CDS"/>
    <property type="molecule type" value="Genomic_DNA"/>
</dbReference>
<dbReference type="EMBL" id="BC052281">
    <property type="protein sequence ID" value="AAH52281.1"/>
    <property type="molecule type" value="mRNA"/>
</dbReference>
<dbReference type="EMBL" id="BC064487">
    <property type="protein sequence ID" value="AAH64487.1"/>
    <property type="molecule type" value="mRNA"/>
</dbReference>
<dbReference type="EMBL" id="BC131820">
    <property type="protein sequence ID" value="AAI31821.1"/>
    <property type="molecule type" value="mRNA"/>
</dbReference>
<dbReference type="EMBL" id="AK025684">
    <property type="protein sequence ID" value="BAB15216.1"/>
    <property type="status" value="ALT_FRAME"/>
    <property type="molecule type" value="mRNA"/>
</dbReference>
<dbReference type="EMBL" id="AK027833">
    <property type="protein sequence ID" value="BAB55399.1"/>
    <property type="molecule type" value="mRNA"/>
</dbReference>
<dbReference type="EMBL" id="AB040933">
    <property type="protein sequence ID" value="BAA96024.2"/>
    <property type="molecule type" value="mRNA"/>
</dbReference>
<dbReference type="EMBL" id="AL831853">
    <property type="protein sequence ID" value="CAD38554.1"/>
    <property type="molecule type" value="mRNA"/>
</dbReference>
<dbReference type="CCDS" id="CCDS54771.1">
    <molecule id="Q86XX4-2"/>
</dbReference>
<dbReference type="CCDS" id="CCDS54772.1">
    <molecule id="Q86XX4-5"/>
</dbReference>
<dbReference type="RefSeq" id="NP_001159605.1">
    <molecule id="Q86XX4-5"/>
    <property type="nucleotide sequence ID" value="NM_001166133.2"/>
</dbReference>
<dbReference type="RefSeq" id="NP_079350.5">
    <molecule id="Q86XX4-2"/>
    <property type="nucleotide sequence ID" value="NM_025074.6"/>
</dbReference>
<dbReference type="SMR" id="Q86XX4"/>
<dbReference type="BioGRID" id="123137">
    <property type="interactions" value="142"/>
</dbReference>
<dbReference type="FunCoup" id="Q86XX4">
    <property type="interactions" value="688"/>
</dbReference>
<dbReference type="IntAct" id="Q86XX4">
    <property type="interactions" value="74"/>
</dbReference>
<dbReference type="MINT" id="Q86XX4"/>
<dbReference type="STRING" id="9606.ENSP00000422834"/>
<dbReference type="GlyCosmos" id="Q86XX4">
    <property type="glycosylation" value="19 sites, 2 glycans"/>
</dbReference>
<dbReference type="GlyGen" id="Q86XX4">
    <property type="glycosylation" value="25 sites, 27 N-linked glycans (9 sites), 3 O-linked glycans (4 sites)"/>
</dbReference>
<dbReference type="iPTMnet" id="Q86XX4"/>
<dbReference type="PhosphoSitePlus" id="Q86XX4"/>
<dbReference type="SwissPalm" id="Q86XX4"/>
<dbReference type="BioMuta" id="FRAS1"/>
<dbReference type="DMDM" id="476007832"/>
<dbReference type="jPOST" id="Q86XX4"/>
<dbReference type="MassIVE" id="Q86XX4"/>
<dbReference type="PaxDb" id="9606-ENSP00000326330"/>
<dbReference type="PeptideAtlas" id="Q86XX4"/>
<dbReference type="ProteomicsDB" id="482"/>
<dbReference type="ProteomicsDB" id="70338">
    <molecule id="Q86XX4-1"/>
</dbReference>
<dbReference type="ProteomicsDB" id="70339">
    <molecule id="Q86XX4-2"/>
</dbReference>
<dbReference type="ProteomicsDB" id="70340">
    <molecule id="Q86XX4-4"/>
</dbReference>
<dbReference type="ProteomicsDB" id="70341">
    <molecule id="Q86XX4-5"/>
</dbReference>
<dbReference type="ProteomicsDB" id="70342">
    <molecule id="Q86XX4-6"/>
</dbReference>
<dbReference type="Pumba" id="Q86XX4"/>
<dbReference type="Antibodypedia" id="2470">
    <property type="antibodies" value="32 antibodies from 9 providers"/>
</dbReference>
<dbReference type="DNASU" id="80144"/>
<dbReference type="Ensembl" id="ENST00000325942.11">
    <molecule id="Q86XX4-5"/>
    <property type="protein sequence ID" value="ENSP00000326330.6"/>
    <property type="gene ID" value="ENSG00000138759.20"/>
</dbReference>
<dbReference type="Ensembl" id="ENST00000502446.6">
    <molecule id="Q86XX4-4"/>
    <property type="protein sequence ID" value="ENSP00000423645.2"/>
    <property type="gene ID" value="ENSG00000138759.20"/>
</dbReference>
<dbReference type="Ensembl" id="ENST00000508900.2">
    <molecule id="Q86XX4-6"/>
    <property type="protein sequence ID" value="ENSP00000423809.2"/>
    <property type="gene ID" value="ENSG00000138759.20"/>
</dbReference>
<dbReference type="Ensembl" id="ENST00000512123.4">
    <molecule id="Q86XX4-2"/>
    <property type="protein sequence ID" value="ENSP00000422834.2"/>
    <property type="gene ID" value="ENSG00000138759.20"/>
</dbReference>
<dbReference type="GeneID" id="80144"/>
<dbReference type="KEGG" id="hsa:80144"/>
<dbReference type="MANE-Select" id="ENST00000512123.4">
    <molecule id="Q86XX4-2"/>
    <property type="protein sequence ID" value="ENSP00000422834.2"/>
    <property type="RefSeq nucleotide sequence ID" value="NM_025074.7"/>
    <property type="RefSeq protein sequence ID" value="NP_079350.5"/>
</dbReference>
<dbReference type="UCSC" id="uc003hkw.4">
    <molecule id="Q86XX4-1"/>
    <property type="organism name" value="human"/>
</dbReference>
<dbReference type="AGR" id="HGNC:19185"/>
<dbReference type="CTD" id="80144"/>
<dbReference type="DisGeNET" id="80144"/>
<dbReference type="GeneCards" id="FRAS1"/>
<dbReference type="HGNC" id="HGNC:19185">
    <property type="gene designation" value="FRAS1"/>
</dbReference>
<dbReference type="HPA" id="ENSG00000138759">
    <property type="expression patterns" value="Tissue enhanced (thyroid)"/>
</dbReference>
<dbReference type="MalaCards" id="FRAS1"/>
<dbReference type="MIM" id="219000">
    <property type="type" value="phenotype"/>
</dbReference>
<dbReference type="MIM" id="607830">
    <property type="type" value="gene"/>
</dbReference>
<dbReference type="neXtProt" id="NX_Q86XX4"/>
<dbReference type="OpenTargets" id="ENSG00000138759"/>
<dbReference type="Orphanet" id="2052">
    <property type="disease" value="Fraser syndrome"/>
</dbReference>
<dbReference type="Orphanet" id="93100">
    <property type="disease" value="Renal agenesis, unilateral"/>
</dbReference>
<dbReference type="PharmGKB" id="PA134980133"/>
<dbReference type="VEuPathDB" id="HostDB:ENSG00000138759"/>
<dbReference type="eggNOG" id="KOG1216">
    <property type="taxonomic scope" value="Eukaryota"/>
</dbReference>
<dbReference type="eggNOG" id="KOG3525">
    <property type="taxonomic scope" value="Eukaryota"/>
</dbReference>
<dbReference type="eggNOG" id="KOG3597">
    <property type="taxonomic scope" value="Eukaryota"/>
</dbReference>
<dbReference type="GeneTree" id="ENSGT00940000162130"/>
<dbReference type="HOGENOM" id="CLU_000898_0_0_1"/>
<dbReference type="InParanoid" id="Q86XX4"/>
<dbReference type="OMA" id="NSGMRVQ"/>
<dbReference type="OrthoDB" id="430044at2759"/>
<dbReference type="PAN-GO" id="Q86XX4">
    <property type="GO annotations" value="2 GO annotations based on evolutionary models"/>
</dbReference>
<dbReference type="PathwayCommons" id="Q86XX4"/>
<dbReference type="SignaLink" id="Q86XX4"/>
<dbReference type="BioGRID-ORCS" id="80144">
    <property type="hits" value="9 hits in 1148 CRISPR screens"/>
</dbReference>
<dbReference type="ChiTaRS" id="FRAS1">
    <property type="organism name" value="human"/>
</dbReference>
<dbReference type="GeneWiki" id="FRAS1"/>
<dbReference type="GenomeRNAi" id="80144"/>
<dbReference type="Pharos" id="Q86XX4">
    <property type="development level" value="Tbio"/>
</dbReference>
<dbReference type="PRO" id="PR:Q86XX4"/>
<dbReference type="Proteomes" id="UP000005640">
    <property type="component" value="Chromosome 4"/>
</dbReference>
<dbReference type="RNAct" id="Q86XX4">
    <property type="molecule type" value="protein"/>
</dbReference>
<dbReference type="Bgee" id="ENSG00000138759">
    <property type="expression patterns" value="Expressed in germinal epithelium of ovary and 144 other cell types or tissues"/>
</dbReference>
<dbReference type="ExpressionAtlas" id="Q86XX4">
    <property type="expression patterns" value="baseline and differential"/>
</dbReference>
<dbReference type="GO" id="GO:0005604">
    <property type="term" value="C:basement membrane"/>
    <property type="evidence" value="ECO:0000250"/>
    <property type="project" value="BHF-UCL"/>
</dbReference>
<dbReference type="GO" id="GO:0062023">
    <property type="term" value="C:collagen-containing extracellular matrix"/>
    <property type="evidence" value="ECO:0000318"/>
    <property type="project" value="GO_Central"/>
</dbReference>
<dbReference type="GO" id="GO:0005886">
    <property type="term" value="C:plasma membrane"/>
    <property type="evidence" value="ECO:0007669"/>
    <property type="project" value="UniProtKB-SubCell"/>
</dbReference>
<dbReference type="GO" id="GO:0005201">
    <property type="term" value="F:extracellular matrix structural constituent"/>
    <property type="evidence" value="ECO:0000250"/>
    <property type="project" value="BHF-UCL"/>
</dbReference>
<dbReference type="GO" id="GO:0046872">
    <property type="term" value="F:metal ion binding"/>
    <property type="evidence" value="ECO:0007669"/>
    <property type="project" value="UniProtKB-KW"/>
</dbReference>
<dbReference type="GO" id="GO:0009653">
    <property type="term" value="P:anatomical structure morphogenesis"/>
    <property type="evidence" value="ECO:0000318"/>
    <property type="project" value="GO_Central"/>
</dbReference>
<dbReference type="GO" id="GO:0007154">
    <property type="term" value="P:cell communication"/>
    <property type="evidence" value="ECO:0007669"/>
    <property type="project" value="InterPro"/>
</dbReference>
<dbReference type="GO" id="GO:0030326">
    <property type="term" value="P:embryonic limb morphogenesis"/>
    <property type="evidence" value="ECO:0007669"/>
    <property type="project" value="Ensembl"/>
</dbReference>
<dbReference type="GO" id="GO:0003338">
    <property type="term" value="P:metanephros morphogenesis"/>
    <property type="evidence" value="ECO:0007669"/>
    <property type="project" value="Ensembl"/>
</dbReference>
<dbReference type="GO" id="GO:0002009">
    <property type="term" value="P:morphogenesis of an epithelium"/>
    <property type="evidence" value="ECO:0007669"/>
    <property type="project" value="Ensembl"/>
</dbReference>
<dbReference type="GO" id="GO:0015031">
    <property type="term" value="P:protein transport"/>
    <property type="evidence" value="ECO:0007669"/>
    <property type="project" value="Ensembl"/>
</dbReference>
<dbReference type="GO" id="GO:0060021">
    <property type="term" value="P:roof of mouth development"/>
    <property type="evidence" value="ECO:0007669"/>
    <property type="project" value="Ensembl"/>
</dbReference>
<dbReference type="GO" id="GO:0043588">
    <property type="term" value="P:skin development"/>
    <property type="evidence" value="ECO:0007669"/>
    <property type="project" value="Ensembl"/>
</dbReference>
<dbReference type="CDD" id="cd00064">
    <property type="entry name" value="FU"/>
    <property type="match status" value="12"/>
</dbReference>
<dbReference type="FunFam" id="2.10.220.10:FF:000039">
    <property type="entry name" value="Extracellular matrix protein FRAS1"/>
    <property type="match status" value="1"/>
</dbReference>
<dbReference type="FunFam" id="2.10.220.10:FF:000062">
    <property type="entry name" value="Extracellular matrix protein FRAS1"/>
    <property type="match status" value="1"/>
</dbReference>
<dbReference type="FunFam" id="2.60.40.2030:FF:000005">
    <property type="entry name" value="Extracellular matrix protein FRAS1 isoform 1"/>
    <property type="match status" value="1"/>
</dbReference>
<dbReference type="FunFam" id="2.10.220.10:FF:000026">
    <property type="entry name" value="Fraser extracellular matrix complex subunit 1"/>
    <property type="match status" value="1"/>
</dbReference>
<dbReference type="FunFam" id="2.10.220.10:FF:000028">
    <property type="entry name" value="Fraser extracellular matrix complex subunit 1"/>
    <property type="match status" value="1"/>
</dbReference>
<dbReference type="FunFam" id="2.10.220.10:FF:000038">
    <property type="entry name" value="Fraser extracellular matrix complex subunit 1"/>
    <property type="match status" value="1"/>
</dbReference>
<dbReference type="FunFam" id="2.10.220.10:FF:000054">
    <property type="entry name" value="Fraser extracellular matrix complex subunit 1"/>
    <property type="match status" value="1"/>
</dbReference>
<dbReference type="FunFam" id="2.60.40.2030:FF:000003">
    <property type="entry name" value="Fraser extracellular matrix complex subunit 1"/>
    <property type="match status" value="1"/>
</dbReference>
<dbReference type="FunFam" id="2.60.40.2030:FF:000006">
    <property type="entry name" value="Fraser extracellular matrix complex subunit 1"/>
    <property type="match status" value="1"/>
</dbReference>
<dbReference type="FunFam" id="2.60.40.2030:FF:000010">
    <property type="entry name" value="Fraser extracellular matrix complex subunit 1"/>
    <property type="match status" value="1"/>
</dbReference>
<dbReference type="FunFam" id="2.60.40.2030:FF:000035">
    <property type="entry name" value="Fraser extracellular matrix complex subunit 1"/>
    <property type="match status" value="1"/>
</dbReference>
<dbReference type="Gene3D" id="2.60.40.2030">
    <property type="match status" value="5"/>
</dbReference>
<dbReference type="Gene3D" id="6.20.200.20">
    <property type="match status" value="4"/>
</dbReference>
<dbReference type="Gene3D" id="2.10.70.10">
    <property type="entry name" value="Complement Module, domain 1"/>
    <property type="match status" value="2"/>
</dbReference>
<dbReference type="Gene3D" id="2.10.220.10">
    <property type="entry name" value="Hormone Receptor, Insulin-like Growth Factor Receptor 1, Chain A, domain 2"/>
    <property type="match status" value="7"/>
</dbReference>
<dbReference type="InterPro" id="IPR038081">
    <property type="entry name" value="CalX-like_sf"/>
</dbReference>
<dbReference type="InterPro" id="IPR003644">
    <property type="entry name" value="Calx_beta"/>
</dbReference>
<dbReference type="InterPro" id="IPR039005">
    <property type="entry name" value="CSPG_rpt"/>
</dbReference>
<dbReference type="InterPro" id="IPR000742">
    <property type="entry name" value="EGF-like_dom"/>
</dbReference>
<dbReference type="InterPro" id="IPR051561">
    <property type="entry name" value="FRAS1_ECM"/>
</dbReference>
<dbReference type="InterPro" id="IPR006212">
    <property type="entry name" value="Furin_repeat"/>
</dbReference>
<dbReference type="InterPro" id="IPR009030">
    <property type="entry name" value="Growth_fac_rcpt_cys_sf"/>
</dbReference>
<dbReference type="InterPro" id="IPR001007">
    <property type="entry name" value="VWF_dom"/>
</dbReference>
<dbReference type="PANTHER" id="PTHR45739:SF1">
    <property type="entry name" value="EXTRACELLULAR MATRIX ORGANIZING PROTEIN FRAS1"/>
    <property type="match status" value="1"/>
</dbReference>
<dbReference type="PANTHER" id="PTHR45739">
    <property type="entry name" value="MATRIX PROTEIN, PUTATIVE-RELATED"/>
    <property type="match status" value="1"/>
</dbReference>
<dbReference type="Pfam" id="PF16184">
    <property type="entry name" value="Cadherin_3"/>
    <property type="match status" value="11"/>
</dbReference>
<dbReference type="Pfam" id="PF03160">
    <property type="entry name" value="Calx-beta"/>
    <property type="match status" value="3"/>
</dbReference>
<dbReference type="Pfam" id="PF00093">
    <property type="entry name" value="VWC"/>
    <property type="match status" value="4"/>
</dbReference>
<dbReference type="SMART" id="SM00237">
    <property type="entry name" value="Calx_beta"/>
    <property type="match status" value="5"/>
</dbReference>
<dbReference type="SMART" id="SM00181">
    <property type="entry name" value="EGF"/>
    <property type="match status" value="9"/>
</dbReference>
<dbReference type="SMART" id="SM00261">
    <property type="entry name" value="FU"/>
    <property type="match status" value="14"/>
</dbReference>
<dbReference type="SMART" id="SM00214">
    <property type="entry name" value="VWC"/>
    <property type="match status" value="6"/>
</dbReference>
<dbReference type="SMART" id="SM00215">
    <property type="entry name" value="VWC_out"/>
    <property type="match status" value="3"/>
</dbReference>
<dbReference type="SUPFAM" id="SSF141072">
    <property type="entry name" value="CalX-like"/>
    <property type="match status" value="5"/>
</dbReference>
<dbReference type="SUPFAM" id="SSF57603">
    <property type="entry name" value="FnI-like domain"/>
    <property type="match status" value="6"/>
</dbReference>
<dbReference type="SUPFAM" id="SSF57184">
    <property type="entry name" value="Growth factor receptor domain"/>
    <property type="match status" value="6"/>
</dbReference>
<dbReference type="PROSITE" id="PS51854">
    <property type="entry name" value="CSPG"/>
    <property type="match status" value="12"/>
</dbReference>
<dbReference type="PROSITE" id="PS01208">
    <property type="entry name" value="VWFC_1"/>
    <property type="match status" value="6"/>
</dbReference>
<dbReference type="PROSITE" id="PS50184">
    <property type="entry name" value="VWFC_2"/>
    <property type="match status" value="6"/>
</dbReference>
<organism>
    <name type="scientific">Homo sapiens</name>
    <name type="common">Human</name>
    <dbReference type="NCBI Taxonomy" id="9606"/>
    <lineage>
        <taxon>Eukaryota</taxon>
        <taxon>Metazoa</taxon>
        <taxon>Chordata</taxon>
        <taxon>Craniata</taxon>
        <taxon>Vertebrata</taxon>
        <taxon>Euteleostomi</taxon>
        <taxon>Mammalia</taxon>
        <taxon>Eutheria</taxon>
        <taxon>Euarchontoglires</taxon>
        <taxon>Primates</taxon>
        <taxon>Haplorrhini</taxon>
        <taxon>Catarrhini</taxon>
        <taxon>Hominidae</taxon>
        <taxon>Homo</taxon>
    </lineage>
</organism>
<comment type="function">
    <text evidence="2">Involved in extracellular matrix organization (By similarity). Required for the regulation of epidermal-basement membrane adhesion responsible for proper organogenesis during embryonic development (By similarity). Involved in brain organization and function (By similarity).</text>
</comment>
<comment type="subcellular location">
    <subcellularLocation>
        <location evidence="2">Cell membrane</location>
        <topology evidence="2">Single-pass type I membrane protein</topology>
        <orientation evidence="2">Extracellular side</orientation>
    </subcellularLocation>
</comment>
<comment type="alternative products">
    <event type="alternative splicing"/>
    <isoform>
        <id>Q86XX4-1</id>
        <name>1</name>
        <sequence type="displayed"/>
    </isoform>
    <isoform>
        <id>Q86XX4-2</id>
        <name>2</name>
        <sequence type="described" ref="VSP_011293 VSP_011294 VSP_011295 VSP_046232 VSP_011299"/>
    </isoform>
    <isoform>
        <id>Q86XX4-4</id>
        <name>4</name>
        <sequence type="described" ref="VSP_011287 VSP_011288"/>
    </isoform>
    <isoform>
        <id>Q86XX4-5</id>
        <name>5</name>
        <sequence type="described" ref="VSP_011291 VSP_011292"/>
    </isoform>
    <isoform>
        <id>Q86XX4-6</id>
        <name>6</name>
        <sequence type="described" ref="VSP_011289 VSP_011290"/>
    </isoform>
</comment>
<comment type="tissue specificity">
    <text evidence="6">Expressed in many adult tissues, with highest levels in kidney, pancreas and thalamus. Relatively high expression was also detected in fetal kidney and heart.</text>
</comment>
<comment type="domain">
    <text evidence="1">The Calx-beta domains bind calcium with high affinity and undergo a major conformational shift upon binding.</text>
</comment>
<comment type="disease" evidence="6 7">
    <disease id="DI-01627">
        <name>Fraser syndrome 1</name>
        <acronym>FRASRS1</acronym>
        <description>A form of Fraser syndrome, an autosomal recessive disorder characterized by cryptophthalmos, cutaneous syndactyly, and urogenital abnormalities including renal agenesis or hypoplasia. Additional features include abnormalities of the larynx, ear malformations, and facial abnormalities.</description>
        <dbReference type="MIM" id="219000"/>
    </disease>
    <text>The disease is caused by variants affecting the gene represented in this entry.</text>
</comment>
<comment type="similarity">
    <text evidence="13">Belongs to the FRAS1 family.</text>
</comment>
<comment type="sequence caution" evidence="13">
    <conflict type="frameshift">
        <sequence resource="EMBL-CDS" id="BAB15216"/>
    </conflict>
</comment>
<sequence>MGVLKVWLGLALALAEFAVLPHHSEGACVYQDSLLADATIWKPDSCQSCRCHGDIVICKPAVCRNPQCAFEKGEVLQIAANQCCPECVLRTPGSCHHEKKIHEHGTEWASSPCSVCSCNHGEVRCTPQPCPPLSCGHQELAFIPEGSCCPVCVGLGKPCSYEGHVFQDGEDWRLSRCAKCLCRNGVAQCFTAQCQPLFCNQDETVVRVPGKCCPQCSARSCSAAGQVYEHGEQWSENACTTCICDRGEVRCHKQACLPLRCGKGQSRARRHGQCCEECVSPAGSCSYDGVVRYQDEMWKGSACEFCMCDHGQVTCQTGECAKVECARDEELIHLDGKCCPECISRNGYCVYEETGEFMSSNASEVKRIPEGEKWEDGPCKVCECRGAQVTCYEPSCPPCPVGTLALEVKGQCCPDCTSVHCHPDCLTCSQSPDHCDLCQDPTKLLQNGWCVHSCGLGFYQAGSLCLACQPQCSTCTSGLECSSCQPPLLMRHGQCVPTCGDGFYQDRHSCAVCHESCAGCWGPTEKHCLACRDPLHVLRDGGCESSCGKGFYNRQGTCSACDQSCDSCGPSSPRCLTCTEKTVLHDGKCMSECPGGYYADATGRCKVCHNSCASCSGPTPSHCTACSPPKALRQGHCLPRCGEGFYSDHGVCKACHSSCLACMGPAPSHCTGCKKPEEGLQVEQLSDVGIPSGECLAQCRAHFYLESTGICEACHQSCFRCAGKSPHNCTDCGPSHVLLDGQCLSQCPDGYFHQEGSCTECHPTCRQCHGPLESDCISCYPHISLTNGNCRTSCREEQFLNLVGYCADCHHLCQHCAADLHNTGSICLRCQNAHYLLLGDHCVPDCPSGYYAERGACKKCHSSCRTCQGRGPFSCSSCDTNLVLSHTGTCSTTCFPGHYLDDNHVCQPCNTHCGSCDSQASCTSCRDPNKVLLFGECQYESCAPQYYLDFSTNTCKECDWSCSACSGPLKTDCLQCMDGYVLQDGACVEQCLSSFYQDSGLCKNCDSYCLQCQGPHECTRCKGPFLLLEAQCVQECGKGYFADHAKHKCTACPQGCLQCSHRDRCHLCDHGFFLKSGLCVYNCVPGFSVHTSNETCSGKIHTPSLHVNGSLILPIGSIKPLDFSLLNVQDQEGRVEDLLFHVVSTPTNGQLVLSRNGKEVQLDKAGRFSWKDVNEKKVRFVHSKEKLRKGYLFLKISDQQFFSEPQLINIQAFSTQAPYVLRNEVLHISRGERATITTQMLDIRDDDNPQDVVIEIIDPPLHGQLLQTLQSPATPIYQFQLDELSRGLLHYAHDGSDSTSDVAVLQANDGHSFHNILFQVKTVPQNDRGLQLVANSMVWVPEGGMLQITNRILQAEAPGASAEEIIYKITQDYPQFGEVVLLVNMPADSPADEGQHLPDGRTATPTSTFTQQDINEGIVWYRHSGAPAQSDSFRFEVSSASNAQTRLESHMFNIAILPQTPEAPKVSLEASLHMTAREDGLTVIQPHSLSFINSEKPSGKIVYNITLPLHPNQGIIEHRDHPHSPIRYFTQEDINQGKVMYRPPPAAPHLQELMAFSFAGLPESVKFHFTVSDGEHTSPEMVLTIHLLPSDQQLPVFQVTAPRLAVSPGGSTSVGLQVVVRDAETAPKELFFELRRPPQHGVLLKHTAEFRRPMATGDTFTYEDVEKNALQYIHDGSSTREDSMEISVTDGLTVTMLEVRVEVSLSEDRGPRLAAGSSLSITVASKSTAIITRSHLAYVDDSSPDPEIWIQLNYLPSYGTLLRISGSEVEELSEVSNFTMEDINNKKIRYSAVFETDGHLVTDSFYFSVSDMDHNHLDNQIFTIMITPAENPPPVIAFADLITVDEGGRAPLSFHHFFATDDDDNLQRDAIIKLSALPKYGCIENTGTGDRFGPETASDLEASFPIQDVLENYIYYFQSVHESIEPTHDIFSFYVSDGTSRSEIHSINITIERKNDEPPRMTLQPLRVQLSSGVVISNSSLSLQDLDTPDNELIFVLTKKPDHGHVLWRQTASEPLENGRVLVQGSTFTYQDILAGLVGYVPSVPGMVVDEFQFSLTDGLHVDTGRMKIYTELPASDTPHLAINQGLQLSAGSVARITEQHLKVTDIDSDDHQVMYIMKEDPGAGRLQMMKHGNLEQISIKGPIRSFTQADISQGQPEYSHGTGEPGGSFAFKFDVVDGEGNRLIDKSFSISISEDKSPPVITTNKGLVLDENSVKKITTLQLSATDQDSGPTELIYRITRQPQLGHLEHAASPGIQISSFTQADLTSRNVQYVHSSEAEKHSDAFSFTLSDGVSEVTQTFHITLHPVDDSLPVVQNLGMRVQEGMRKTITEFELKAVDADTEAESVTFTIVQPPRHGTIERTSNGQHFHLTSTFTMKDIYQNRVSYSHDGSNSLKDRFTFTVSDGTNPFFIIEEGGKEIMTAAPQPFRVDILPVDDGTPRIVTNLGLQWLEYMDGKATNLITKKELLTMDPDTEDAQLVYEITTGPKHGFVENKLQPGRAAATFTQEDVNLGLIRYVLHKEKIREMMDSFQFLVKDSKPNVVSDNVFHIQWSLISFKYTSYNVSEKAGSVSVTVQRTGNLNQYAIVLCRTEQGTASSSSQPGQQDYVEYAGQVQFDEREDTKSCTIVINDDDVFENVESFTVELSMPAYALLGEFTQAKVIINDTEDEPTLEFDKKIYWVNESAGFLFAPIERKGDASSIVSAICYTVPKSAMGSLFYALESGSDFKSRGMSAASRVIFGPGVTMSTCDVMLIDDSEYEEEEEFEIALADASDNARIGRVATAKVLISGPNDASTVSLGNTAFTVSEDAGTVKIPVIRHGTDLSTFASVWCATRPSDPASATPGVDYVPSSRKVEFGPGVIEQYCTLTILDDTQYPVIEGLETFVVFLSSAQGAELTKPFQAVIAINDTFQDVPSMQFAKDLLLVKEKEGVLHVPITRSGDLSYESSVRCYTQSHSAQVMEDFEERQNADSSRITFLKGDKVKNCTVYIHDDSMFEPEEQFRVYLGLPLGNHWSGARIGKNNMATITISNDEDAPTIEFEEAAYQVREPAGPDAIAILNIKVIRRGDQNRTSKVRCSTRDGSAQSGVDYYPKSRVLKFSPGVDHIFFKVEILSNEDREWHESFSLVLGPDDPVEAVLGDVTTATVTILDQEAAGSLILPAPPIVVTLADYDHVEEVTKEGVKKSPSPGYPLVCVTPCDPHFPRYAVMKERCSEAGINQTSVQFSWEVAAPTDGNGARSPFETITDNTPFTSVNHMVLDSIYFSRRFHVRCVAKAVDKVGHVGTPLRSNIVTIGTDSAICHTPVVAGTSRGFQAQSFIATLKYLDVKHKEHPNRIHISVQIPHQDGMLPLISTMPLHNLHFLLSESIYRHQHVCSNLVTTYDLRGLAEAGFLDDVVYDSTALGPGYDRPFQFDPSVREPKTIQLYKHLNLKSCVWTFDAYYDMTELIDVCGGSVTADFQVRDSAQSFLTVHVPLYVSYIYVTAPRGWASLEHHTEMEFSFFYDTVLWRTGIQTDSVLSARLQIIRIYIREDGRLVIEFKTHAKFRGQFVMEHHTLPEVKSFVLTPDHLGGIEFDLQLLWSAQTFDSPHQLWRATSSYNRKDYSGEYTIYLIPCTVQPTQPWVDPGEKPLACTAHAPERFLIPIAFQQTNRPVPVVYSLNTEFQLCNNEKVFLMDPNTSDMSLAEMDYKGAFSKGQILYGRVLWNPEQNLNSAYKLQLEKVYLCTGKDGYVPFFDPTGTIYNEGPQYGCIQPNKHLKHRFLLLDRNQPEVTDKYFHDVPFEAHFASELPDFHVVSNMPGVDGFTLKVDALYKVEAGHQWYLQVIYIIGPDTISGPRVQRSLTAPLRRNRRDLVEPDGQLILDDSLIYDNEGDQVKNGTNMKSLNLEMQELAVAASLSQTGASIGSALAAIMLLLLVFLVACFINRKCQKQRKKKPAEDILEEYPLNTKVEVPKRHPDRVEKNVNRHYCTVRNVNILSEPEAAYTFKGAKVKRLNLEVRVHNNLQDGTEV</sequence>
<keyword id="KW-0025">Alternative splicing</keyword>
<keyword id="KW-0106">Calcium</keyword>
<keyword id="KW-1003">Cell membrane</keyword>
<keyword id="KW-0325">Glycoprotein</keyword>
<keyword id="KW-0472">Membrane</keyword>
<keyword id="KW-0479">Metal-binding</keyword>
<keyword id="KW-0597">Phosphoprotein</keyword>
<keyword id="KW-1267">Proteomics identification</keyword>
<keyword id="KW-1185">Reference proteome</keyword>
<keyword id="KW-0677">Repeat</keyword>
<keyword id="KW-0732">Signal</keyword>
<keyword id="KW-0812">Transmembrane</keyword>
<keyword id="KW-1133">Transmembrane helix</keyword>
<reference key="1">
    <citation type="journal article" date="2003" name="Nat. Genet.">
        <title>Fraser syndrome and mouse blebbed phenotype caused by mutations in FRAS1/Fras1 encoding a putative extracellular matrix protein.</title>
        <authorList>
            <person name="McGregor L.K."/>
            <person name="Makela V."/>
            <person name="Darling S.M."/>
            <person name="Vrontou S."/>
            <person name="Chalepakis G."/>
            <person name="Roberts C."/>
            <person name="Smart N."/>
            <person name="Rutland P."/>
            <person name="Prescott N."/>
            <person name="Hopkins J."/>
            <person name="Bentley E."/>
            <person name="Shaw A."/>
            <person name="Roberts E."/>
            <person name="Mueller R."/>
            <person name="Jadeja S."/>
            <person name="Philip N."/>
            <person name="Nelson J."/>
            <person name="Francannet C."/>
            <person name="Perez-Aytes A."/>
            <person name="Megarbane A."/>
            <person name="Kerr B."/>
            <person name="Wainwright B."/>
            <person name="Woolf A.S."/>
            <person name="Winter R.M."/>
            <person name="Scambler P.J."/>
        </authorList>
    </citation>
    <scope>NUCLEOTIDE SEQUENCE [GENOMIC DNA] (ISOFORM 1)</scope>
    <scope>TISSUE SPECIFICITY</scope>
    <scope>INVOLVEMENT IN FRASRS1</scope>
</reference>
<reference key="2">
    <citation type="journal article" date="2005" name="Nature">
        <title>Generation and annotation of the DNA sequences of human chromosomes 2 and 4.</title>
        <authorList>
            <person name="Hillier L.W."/>
            <person name="Graves T.A."/>
            <person name="Fulton R.S."/>
            <person name="Fulton L.A."/>
            <person name="Pepin K.H."/>
            <person name="Minx P."/>
            <person name="Wagner-McPherson C."/>
            <person name="Layman D."/>
            <person name="Wylie K."/>
            <person name="Sekhon M."/>
            <person name="Becker M.C."/>
            <person name="Fewell G.A."/>
            <person name="Delehaunty K.D."/>
            <person name="Miner T.L."/>
            <person name="Nash W.E."/>
            <person name="Kremitzki C."/>
            <person name="Oddy L."/>
            <person name="Du H."/>
            <person name="Sun H."/>
            <person name="Bradshaw-Cordum H."/>
            <person name="Ali J."/>
            <person name="Carter J."/>
            <person name="Cordes M."/>
            <person name="Harris A."/>
            <person name="Isak A."/>
            <person name="van Brunt A."/>
            <person name="Nguyen C."/>
            <person name="Du F."/>
            <person name="Courtney L."/>
            <person name="Kalicki J."/>
            <person name="Ozersky P."/>
            <person name="Abbott S."/>
            <person name="Armstrong J."/>
            <person name="Belter E.A."/>
            <person name="Caruso L."/>
            <person name="Cedroni M."/>
            <person name="Cotton M."/>
            <person name="Davidson T."/>
            <person name="Desai A."/>
            <person name="Elliott G."/>
            <person name="Erb T."/>
            <person name="Fronick C."/>
            <person name="Gaige T."/>
            <person name="Haakenson W."/>
            <person name="Haglund K."/>
            <person name="Holmes A."/>
            <person name="Harkins R."/>
            <person name="Kim K."/>
            <person name="Kruchowski S.S."/>
            <person name="Strong C.M."/>
            <person name="Grewal N."/>
            <person name="Goyea E."/>
            <person name="Hou S."/>
            <person name="Levy A."/>
            <person name="Martinka S."/>
            <person name="Mead K."/>
            <person name="McLellan M.D."/>
            <person name="Meyer R."/>
            <person name="Randall-Maher J."/>
            <person name="Tomlinson C."/>
            <person name="Dauphin-Kohlberg S."/>
            <person name="Kozlowicz-Reilly A."/>
            <person name="Shah N."/>
            <person name="Swearengen-Shahid S."/>
            <person name="Snider J."/>
            <person name="Strong J.T."/>
            <person name="Thompson J."/>
            <person name="Yoakum M."/>
            <person name="Leonard S."/>
            <person name="Pearman C."/>
            <person name="Trani L."/>
            <person name="Radionenko M."/>
            <person name="Waligorski J.E."/>
            <person name="Wang C."/>
            <person name="Rock S.M."/>
            <person name="Tin-Wollam A.-M."/>
            <person name="Maupin R."/>
            <person name="Latreille P."/>
            <person name="Wendl M.C."/>
            <person name="Yang S.-P."/>
            <person name="Pohl C."/>
            <person name="Wallis J.W."/>
            <person name="Spieth J."/>
            <person name="Bieri T.A."/>
            <person name="Berkowicz N."/>
            <person name="Nelson J.O."/>
            <person name="Osborne J."/>
            <person name="Ding L."/>
            <person name="Meyer R."/>
            <person name="Sabo A."/>
            <person name="Shotland Y."/>
            <person name="Sinha P."/>
            <person name="Wohldmann P.E."/>
            <person name="Cook L.L."/>
            <person name="Hickenbotham M.T."/>
            <person name="Eldred J."/>
            <person name="Williams D."/>
            <person name="Jones T.A."/>
            <person name="She X."/>
            <person name="Ciccarelli F.D."/>
            <person name="Izaurralde E."/>
            <person name="Taylor J."/>
            <person name="Schmutz J."/>
            <person name="Myers R.M."/>
            <person name="Cox D.R."/>
            <person name="Huang X."/>
            <person name="McPherson J.D."/>
            <person name="Mardis E.R."/>
            <person name="Clifton S.W."/>
            <person name="Warren W.C."/>
            <person name="Chinwalla A.T."/>
            <person name="Eddy S.R."/>
            <person name="Marra M.A."/>
            <person name="Ovcharenko I."/>
            <person name="Furey T.S."/>
            <person name="Miller W."/>
            <person name="Eichler E.E."/>
            <person name="Bork P."/>
            <person name="Suyama M."/>
            <person name="Torrents D."/>
            <person name="Waterston R.H."/>
            <person name="Wilson R.K."/>
        </authorList>
    </citation>
    <scope>NUCLEOTIDE SEQUENCE [LARGE SCALE GENOMIC DNA]</scope>
</reference>
<reference key="3">
    <citation type="journal article" date="2004" name="Genome Res.">
        <title>The status, quality, and expansion of the NIH full-length cDNA project: the Mammalian Gene Collection (MGC).</title>
        <authorList>
            <consortium name="The MGC Project Team"/>
        </authorList>
    </citation>
    <scope>NUCLEOTIDE SEQUENCE [LARGE SCALE MRNA] (ISOFORM 5)</scope>
    <scope>NUCLEOTIDE SEQUENCE [LARGE SCALE MRNA] OF 159-4008 (ISOFORM 6)</scope>
    <source>
        <tissue>Ovary</tissue>
    </source>
</reference>
<reference key="4">
    <citation type="journal article" date="2004" name="Nat. Genet.">
        <title>Complete sequencing and characterization of 21,243 full-length human cDNAs.</title>
        <authorList>
            <person name="Ota T."/>
            <person name="Suzuki Y."/>
            <person name="Nishikawa T."/>
            <person name="Otsuki T."/>
            <person name="Sugiyama T."/>
            <person name="Irie R."/>
            <person name="Wakamatsu A."/>
            <person name="Hayashi K."/>
            <person name="Sato H."/>
            <person name="Nagai K."/>
            <person name="Kimura K."/>
            <person name="Makita H."/>
            <person name="Sekine M."/>
            <person name="Obayashi M."/>
            <person name="Nishi T."/>
            <person name="Shibahara T."/>
            <person name="Tanaka T."/>
            <person name="Ishii S."/>
            <person name="Yamamoto J."/>
            <person name="Saito K."/>
            <person name="Kawai Y."/>
            <person name="Isono Y."/>
            <person name="Nakamura Y."/>
            <person name="Nagahari K."/>
            <person name="Murakami K."/>
            <person name="Yasuda T."/>
            <person name="Iwayanagi T."/>
            <person name="Wagatsuma M."/>
            <person name="Shiratori A."/>
            <person name="Sudo H."/>
            <person name="Hosoiri T."/>
            <person name="Kaku Y."/>
            <person name="Kodaira H."/>
            <person name="Kondo H."/>
            <person name="Sugawara M."/>
            <person name="Takahashi M."/>
            <person name="Kanda K."/>
            <person name="Yokoi T."/>
            <person name="Furuya T."/>
            <person name="Kikkawa E."/>
            <person name="Omura Y."/>
            <person name="Abe K."/>
            <person name="Kamihara K."/>
            <person name="Katsuta N."/>
            <person name="Sato K."/>
            <person name="Tanikawa M."/>
            <person name="Yamazaki M."/>
            <person name="Ninomiya K."/>
            <person name="Ishibashi T."/>
            <person name="Yamashita H."/>
            <person name="Murakawa K."/>
            <person name="Fujimori K."/>
            <person name="Tanai H."/>
            <person name="Kimata M."/>
            <person name="Watanabe M."/>
            <person name="Hiraoka S."/>
            <person name="Chiba Y."/>
            <person name="Ishida S."/>
            <person name="Ono Y."/>
            <person name="Takiguchi S."/>
            <person name="Watanabe S."/>
            <person name="Yosida M."/>
            <person name="Hotuta T."/>
            <person name="Kusano J."/>
            <person name="Kanehori K."/>
            <person name="Takahashi-Fujii A."/>
            <person name="Hara H."/>
            <person name="Tanase T.-O."/>
            <person name="Nomura Y."/>
            <person name="Togiya S."/>
            <person name="Komai F."/>
            <person name="Hara R."/>
            <person name="Takeuchi K."/>
            <person name="Arita M."/>
            <person name="Imose N."/>
            <person name="Musashino K."/>
            <person name="Yuuki H."/>
            <person name="Oshima A."/>
            <person name="Sasaki N."/>
            <person name="Aotsuka S."/>
            <person name="Yoshikawa Y."/>
            <person name="Matsunawa H."/>
            <person name="Ichihara T."/>
            <person name="Shiohata N."/>
            <person name="Sano S."/>
            <person name="Moriya S."/>
            <person name="Momiyama H."/>
            <person name="Satoh N."/>
            <person name="Takami S."/>
            <person name="Terashima Y."/>
            <person name="Suzuki O."/>
            <person name="Nakagawa S."/>
            <person name="Senoh A."/>
            <person name="Mizoguchi H."/>
            <person name="Goto Y."/>
            <person name="Shimizu F."/>
            <person name="Wakebe H."/>
            <person name="Hishigaki H."/>
            <person name="Watanabe T."/>
            <person name="Sugiyama A."/>
            <person name="Takemoto M."/>
            <person name="Kawakami B."/>
            <person name="Yamazaki M."/>
            <person name="Watanabe K."/>
            <person name="Kumagai A."/>
            <person name="Itakura S."/>
            <person name="Fukuzumi Y."/>
            <person name="Fujimori Y."/>
            <person name="Komiyama M."/>
            <person name="Tashiro H."/>
            <person name="Tanigami A."/>
            <person name="Fujiwara T."/>
            <person name="Ono T."/>
            <person name="Yamada K."/>
            <person name="Fujii Y."/>
            <person name="Ozaki K."/>
            <person name="Hirao M."/>
            <person name="Ohmori Y."/>
            <person name="Kawabata A."/>
            <person name="Hikiji T."/>
            <person name="Kobatake N."/>
            <person name="Inagaki H."/>
            <person name="Ikema Y."/>
            <person name="Okamoto S."/>
            <person name="Okitani R."/>
            <person name="Kawakami T."/>
            <person name="Noguchi S."/>
            <person name="Itoh T."/>
            <person name="Shigeta K."/>
            <person name="Senba T."/>
            <person name="Matsumura K."/>
            <person name="Nakajima Y."/>
            <person name="Mizuno T."/>
            <person name="Morinaga M."/>
            <person name="Sasaki M."/>
            <person name="Togashi T."/>
            <person name="Oyama M."/>
            <person name="Hata H."/>
            <person name="Watanabe M."/>
            <person name="Komatsu T."/>
            <person name="Mizushima-Sugano J."/>
            <person name="Satoh T."/>
            <person name="Shirai Y."/>
            <person name="Takahashi Y."/>
            <person name="Nakagawa K."/>
            <person name="Okumura K."/>
            <person name="Nagase T."/>
            <person name="Nomura N."/>
            <person name="Kikuchi H."/>
            <person name="Masuho Y."/>
            <person name="Yamashita R."/>
            <person name="Nakai K."/>
            <person name="Yada T."/>
            <person name="Nakamura Y."/>
            <person name="Ohara O."/>
            <person name="Isogai T."/>
            <person name="Sugano S."/>
        </authorList>
    </citation>
    <scope>NUCLEOTIDE SEQUENCE [LARGE SCALE MRNA] OF 193-4008 (ISOFORM 4)</scope>
    <scope>NUCLEOTIDE SEQUENCE [LARGE SCALE MRNA] OF 1560-1953 (ISOFORM 1)</scope>
    <source>
        <tissue>Placenta</tissue>
    </source>
</reference>
<reference key="5">
    <citation type="journal article" date="2000" name="DNA Res.">
        <title>Prediction of the coding sequences of unidentified human genes. XVII. The complete sequences of 100 new cDNA clones from brain which code for large proteins in vitro.</title>
        <authorList>
            <person name="Nagase T."/>
            <person name="Kikuno R."/>
            <person name="Ishikawa K."/>
            <person name="Hirosawa M."/>
            <person name="Ohara O."/>
        </authorList>
    </citation>
    <scope>NUCLEOTIDE SEQUENCE [LARGE SCALE MRNA] OF 1773-4008 (ISOFORM 2)</scope>
    <source>
        <tissue>Brain</tissue>
    </source>
</reference>
<reference key="6">
    <citation type="journal article" date="2007" name="BMC Genomics">
        <title>The full-ORF clone resource of the German cDNA consortium.</title>
        <authorList>
            <person name="Bechtel S."/>
            <person name="Rosenfelder H."/>
            <person name="Duda A."/>
            <person name="Schmidt C.P."/>
            <person name="Ernst U."/>
            <person name="Wellenreuther R."/>
            <person name="Mehrle A."/>
            <person name="Schuster C."/>
            <person name="Bahr A."/>
            <person name="Bloecker H."/>
            <person name="Heubner D."/>
            <person name="Hoerlein A."/>
            <person name="Michel G."/>
            <person name="Wedler H."/>
            <person name="Koehrer K."/>
            <person name="Ottenwaelder B."/>
            <person name="Poustka A."/>
            <person name="Wiemann S."/>
            <person name="Schupp I."/>
        </authorList>
    </citation>
    <scope>NUCLEOTIDE SEQUENCE [LARGE SCALE MRNA] OF 1773-4008 (ISOFORM 5)</scope>
    <source>
        <tissue>Amygdala</tissue>
    </source>
</reference>
<reference key="7">
    <citation type="journal article" date="2009" name="Sci. Signal.">
        <title>Quantitative phosphoproteomic analysis of T cell receptor signaling reveals system-wide modulation of protein-protein interactions.</title>
        <authorList>
            <person name="Mayya V."/>
            <person name="Lundgren D.H."/>
            <person name="Hwang S.-I."/>
            <person name="Rezaul K."/>
            <person name="Wu L."/>
            <person name="Eng J.K."/>
            <person name="Rodionov V."/>
            <person name="Han D.K."/>
        </authorList>
    </citation>
    <scope>PHOSPHORYLATION [LARGE SCALE ANALYSIS] AT SER-344</scope>
    <scope>IDENTIFICATION BY MASS SPECTROMETRY [LARGE SCALE ANALYSIS]</scope>
    <source>
        <tissue>Leukemic T-cell</tissue>
    </source>
</reference>
<reference key="8">
    <citation type="journal article" date="2011" name="BMC Syst. Biol.">
        <title>Initial characterization of the human central proteome.</title>
        <authorList>
            <person name="Burkard T.R."/>
            <person name="Planyavsky M."/>
            <person name="Kaupe I."/>
            <person name="Breitwieser F.P."/>
            <person name="Buerckstuemmer T."/>
            <person name="Bennett K.L."/>
            <person name="Superti-Furga G."/>
            <person name="Colinge J."/>
        </authorList>
    </citation>
    <scope>IDENTIFICATION BY MASS SPECTROMETRY [LARGE SCALE ANALYSIS]</scope>
</reference>
<reference key="9">
    <citation type="journal article" date="2013" name="Gene">
        <title>Expanding the mutation spectrum for Fraser syndrome: identification of a novel heterozygous deletion in FRAS1.</title>
        <authorList>
            <person name="Hoefele J."/>
            <person name="Wilhelm C."/>
            <person name="Schiesser M."/>
            <person name="Mack R."/>
            <person name="Heinrich U."/>
            <person name="Weber L.T."/>
            <person name="Biskup S."/>
            <person name="Daumer-Haas C."/>
            <person name="Klein H.G."/>
            <person name="Rost I."/>
        </authorList>
    </citation>
    <scope>INVOLVEMENT IN FRASRS1</scope>
</reference>
<feature type="signal peptide" evidence="3">
    <location>
        <begin position="1"/>
        <end position="26"/>
    </location>
</feature>
<feature type="chain" id="PRO_0000010120" description="Extracellular matrix organizing protein FRAS1">
    <location>
        <begin position="27"/>
        <end position="4008"/>
    </location>
</feature>
<feature type="topological domain" description="Extracellular" evidence="3">
    <location>
        <begin position="27"/>
        <end position="3901"/>
    </location>
</feature>
<feature type="transmembrane region" description="Helical" evidence="3">
    <location>
        <begin position="3902"/>
        <end position="3922"/>
    </location>
</feature>
<feature type="topological domain" description="Cytoplasmic" evidence="3">
    <location>
        <begin position="3923"/>
        <end position="4008"/>
    </location>
</feature>
<feature type="domain" description="VWFC 1" evidence="4">
    <location>
        <begin position="27"/>
        <end position="88"/>
    </location>
</feature>
<feature type="domain" description="VWFC 2" evidence="4">
    <location>
        <begin position="93"/>
        <end position="153"/>
    </location>
</feature>
<feature type="domain" description="VWFC 3" evidence="4">
    <location>
        <begin position="157"/>
        <end position="217"/>
    </location>
</feature>
<feature type="domain" description="VWFC 4" evidence="4">
    <location>
        <begin position="219"/>
        <end position="279"/>
    </location>
</feature>
<feature type="domain" description="VWFC 5" evidence="4">
    <location>
        <begin position="283"/>
        <end position="343"/>
    </location>
</feature>
<feature type="domain" description="VWFC 6" evidence="4">
    <location>
        <begin position="347"/>
        <end position="417"/>
    </location>
</feature>
<feature type="repeat" description="FU 1">
    <location>
        <begin position="409"/>
        <end position="460"/>
    </location>
</feature>
<feature type="repeat" description="FU 2">
    <location>
        <begin position="462"/>
        <end position="505"/>
    </location>
</feature>
<feature type="repeat" description="FU 3">
    <location>
        <begin position="507"/>
        <end position="553"/>
    </location>
</feature>
<feature type="repeat" description="FU 4">
    <location>
        <begin position="555"/>
        <end position="599"/>
    </location>
</feature>
<feature type="repeat" description="FU 5">
    <location>
        <begin position="602"/>
        <end position="647"/>
    </location>
</feature>
<feature type="repeat" description="FU 6">
    <location>
        <begin position="649"/>
        <end position="705"/>
    </location>
</feature>
<feature type="repeat" description="FU 7">
    <location>
        <begin position="708"/>
        <end position="753"/>
    </location>
</feature>
<feature type="repeat" description="FU 8">
    <location>
        <begin position="755"/>
        <end position="800"/>
    </location>
</feature>
<feature type="repeat" description="FU 9">
    <location>
        <begin position="803"/>
        <end position="852"/>
    </location>
</feature>
<feature type="repeat" description="FU 10">
    <location>
        <begin position="854"/>
        <end position="900"/>
    </location>
</feature>
<feature type="repeat" description="FU 11">
    <location>
        <begin position="903"/>
        <end position="948"/>
    </location>
</feature>
<feature type="repeat" description="FU 12">
    <location>
        <begin position="952"/>
        <end position="997"/>
    </location>
</feature>
<feature type="repeat" description="FU 13">
    <location>
        <begin position="999"/>
        <end position="1042"/>
    </location>
</feature>
<feature type="repeat" description="FU 14">
    <location>
        <begin position="1046"/>
        <end position="1089"/>
    </location>
</feature>
<feature type="repeat" description="CSPG 1" evidence="5">
    <location>
        <begin position="1102"/>
        <end position="1197"/>
    </location>
</feature>
<feature type="repeat" description="CSPG 2" evidence="5">
    <location>
        <begin position="1217"/>
        <end position="1308"/>
    </location>
</feature>
<feature type="repeat" description="CSPG 3" evidence="5">
    <location>
        <begin position="1329"/>
        <end position="1438"/>
    </location>
</feature>
<feature type="repeat" description="CSPG 4" evidence="5">
    <location>
        <begin position="1463"/>
        <end position="1559"/>
    </location>
</feature>
<feature type="repeat" description="CSPG 5" evidence="5">
    <location>
        <begin position="1595"/>
        <end position="1689"/>
    </location>
</feature>
<feature type="repeat" description="CSPG 6" evidence="5">
    <location>
        <begin position="1710"/>
        <end position="1810"/>
    </location>
</feature>
<feature type="repeat" description="CSPG 7" evidence="5">
    <location>
        <begin position="1833"/>
        <end position="1936"/>
    </location>
</feature>
<feature type="repeat" description="CSPG 8" evidence="5">
    <location>
        <begin position="1957"/>
        <end position="2057"/>
    </location>
</feature>
<feature type="repeat" description="CSPG 9" evidence="5">
    <location>
        <begin position="2078"/>
        <end position="2177"/>
    </location>
</feature>
<feature type="repeat" description="CSPG 10" evidence="5">
    <location>
        <begin position="2199"/>
        <end position="2291"/>
    </location>
</feature>
<feature type="repeat" description="CSPG 11" evidence="5">
    <location>
        <begin position="2311"/>
        <end position="2404"/>
    </location>
</feature>
<feature type="repeat" description="CSPG 12" evidence="5">
    <location>
        <begin position="2439"/>
        <end position="2536"/>
    </location>
</feature>
<feature type="domain" description="Calx-beta 1">
    <location>
        <begin position="2543"/>
        <end position="2646"/>
    </location>
</feature>
<feature type="domain" description="Calx-beta 2">
    <location>
        <begin position="2659"/>
        <end position="2770"/>
    </location>
</feature>
<feature type="domain" description="Calx-beta 3">
    <location>
        <begin position="2784"/>
        <end position="2890"/>
    </location>
</feature>
<feature type="domain" description="Calx-beta 4">
    <location>
        <begin position="2905"/>
        <end position="3007"/>
    </location>
</feature>
<feature type="domain" description="Calx-beta 5">
    <location>
        <begin position="3025"/>
        <end position="3129"/>
    </location>
</feature>
<feature type="modified residue" description="Phosphoserine" evidence="15">
    <location>
        <position position="344"/>
    </location>
</feature>
<feature type="glycosylation site" description="N-linked (GlcNAc...) asparagine" evidence="3">
    <location>
        <position position="361"/>
    </location>
</feature>
<feature type="glycosylation site" description="N-linked (GlcNAc...) asparagine" evidence="3">
    <location>
        <position position="728"/>
    </location>
</feature>
<feature type="glycosylation site" description="N-linked (GlcNAc...) asparagine" evidence="3">
    <location>
        <position position="1093"/>
    </location>
</feature>
<feature type="glycosylation site" description="N-linked (GlcNAc...) asparagine" evidence="3">
    <location>
        <position position="1108"/>
    </location>
</feature>
<feature type="glycosylation site" description="N-linked (GlcNAc...) asparagine" evidence="3">
    <location>
        <position position="1504"/>
    </location>
</feature>
<feature type="glycosylation site" description="N-linked (GlcNAc...) asparagine" evidence="3">
    <location>
        <position position="1777"/>
    </location>
</feature>
<feature type="glycosylation site" description="N-linked (GlcNAc...) asparagine" evidence="3">
    <location>
        <position position="1948"/>
    </location>
</feature>
<feature type="glycosylation site" description="N-linked (GlcNAc...) asparagine" evidence="3">
    <location>
        <position position="1978"/>
    </location>
</feature>
<feature type="glycosylation site" description="N-linked (GlcNAc...) asparagine" evidence="3">
    <location>
        <position position="2563"/>
    </location>
</feature>
<feature type="glycosylation site" description="N-linked (GlcNAc...) asparagine" evidence="3">
    <location>
        <position position="2664"/>
    </location>
</feature>
<feature type="glycosylation site" description="N-linked (GlcNAc...) asparagine" evidence="3">
    <location>
        <position position="2682"/>
    </location>
</feature>
<feature type="glycosylation site" description="N-linked (GlcNAc...) asparagine" evidence="3">
    <location>
        <position position="2908"/>
    </location>
</feature>
<feature type="glycosylation site" description="N-linked (GlcNAc...) asparagine" evidence="3">
    <location>
        <position position="2985"/>
    </location>
</feature>
<feature type="glycosylation site" description="N-linked (GlcNAc...) asparagine" evidence="3">
    <location>
        <position position="3070"/>
    </location>
</feature>
<feature type="glycosylation site" description="N-linked (GlcNAc...) asparagine" evidence="3">
    <location>
        <position position="3218"/>
    </location>
</feature>
<feature type="glycosylation site" description="N-linked (GlcNAc...) asparagine" evidence="3">
    <location>
        <position position="3676"/>
    </location>
</feature>
<feature type="glycosylation site" description="N-linked (GlcNAc...) asparagine" evidence="3">
    <location>
        <position position="3875"/>
    </location>
</feature>
<feature type="splice variant" id="VSP_011287" description="In isoform 4." evidence="10">
    <original>ACHQSCFRCAGKSPHNCTDCGPSHV</original>
    <variation>GQNLDFCQNLEVISAVCLGISSTEN</variation>
    <location>
        <begin position="713"/>
        <end position="737"/>
    </location>
</feature>
<feature type="splice variant" id="VSP_011288" description="In isoform 4." evidence="10">
    <location>
        <begin position="738"/>
        <end position="4008"/>
    </location>
</feature>
<feature type="splice variant" id="VSP_011289" description="In isoform 6." evidence="11">
    <original>DC</original>
    <variation>GE</variation>
    <location>
        <begin position="808"/>
        <end position="809"/>
    </location>
</feature>
<feature type="splice variant" id="VSP_011290" description="In isoform 6." evidence="11">
    <location>
        <begin position="810"/>
        <end position="4008"/>
    </location>
</feature>
<feature type="splice variant" id="VSP_011291" description="In isoform 5." evidence="11 12">
    <original>RKNDEPPRMTLQPLRVQLSSGVVI</original>
    <variation>VKTLEVGKVEPLTTIFHTIRELSL</variation>
    <location>
        <begin position="1953"/>
        <end position="1976"/>
    </location>
</feature>
<feature type="splice variant" id="VSP_011292" description="In isoform 5." evidence="11 12">
    <location>
        <begin position="1977"/>
        <end position="4008"/>
    </location>
</feature>
<feature type="splice variant" id="VSP_011293" description="In isoform 2." evidence="8">
    <original>QP</original>
    <variation>HV</variation>
    <location>
        <begin position="2156"/>
        <end position="2157"/>
    </location>
</feature>
<feature type="splice variant" id="VSP_011294" description="In isoform 2." evidence="8">
    <original>S</original>
    <variation>L</variation>
    <location>
        <position position="2194"/>
    </location>
</feature>
<feature type="splice variant" id="VSP_011295" description="In isoform 2." evidence="8">
    <original>S</original>
    <variation>SSSRV</variation>
    <location>
        <position position="2598"/>
    </location>
</feature>
<feature type="splice variant" id="VSP_046232" description="In isoform 2." evidence="8">
    <original>LF</original>
    <variation>SL</variation>
    <location>
        <begin position="2717"/>
        <end position="2718"/>
    </location>
</feature>
<feature type="splice variant" id="VSP_011299" description="In isoform 2." evidence="8">
    <original>LA</original>
    <variation>IS</variation>
    <location>
        <begin position="3386"/>
        <end position="3387"/>
    </location>
</feature>
<feature type="sequence variant" id="VAR_069150" description="In dbSNP:rs4859905.">
    <original>D</original>
    <variation>G</variation>
    <location>
        <position position="32"/>
    </location>
</feature>
<feature type="sequence variant" id="VAR_055807" description="In dbSNP:rs17003071.">
    <original>D</original>
    <variation>H</variation>
    <location>
        <position position="54"/>
    </location>
</feature>
<feature type="sequence variant" id="VAR_055808" description="In dbSNP:rs7699637.">
    <original>P</original>
    <variation>S</variation>
    <location>
        <position position="209"/>
    </location>
</feature>
<feature type="sequence variant" id="VAR_055809" description="In dbSNP:rs7682296.">
    <original>Y</original>
    <variation>H</variation>
    <location>
        <position position="228"/>
    </location>
</feature>
<feature type="sequence variant" id="VAR_055810" description="In dbSNP:rs6848030.">
    <original>I</original>
    <variation>V</variation>
    <location>
        <position position="243"/>
    </location>
</feature>
<feature type="sequence variant" id="VAR_055811" description="In dbSNP:rs6838959.">
    <original>S</original>
    <variation>Y</variation>
    <location>
        <position position="429"/>
    </location>
</feature>
<feature type="sequence variant" id="VAR_055812" description="In dbSNP:rs12504081.">
    <original>L</original>
    <variation>I</variation>
    <location>
        <position position="466"/>
    </location>
</feature>
<feature type="sequence variant" id="VAR_055813" description="In dbSNP:rs35030041.">
    <original>M</original>
    <variation>T</variation>
    <location>
        <position position="590"/>
    </location>
</feature>
<feature type="sequence variant" id="VAR_069151" description="In dbSNP:rs345513.">
    <original>D</original>
    <variation>G</variation>
    <location>
        <position position="687"/>
    </location>
</feature>
<feature type="sequence variant" id="VAR_069152" description="In dbSNP:rs345512.">
    <original>I</original>
    <variation>L</variation>
    <location>
        <position position="710"/>
    </location>
</feature>
<feature type="sequence variant" id="VAR_055814" description="In dbSNP:rs6835769.">
    <original>A</original>
    <variation>V</variation>
    <location>
        <position position="817"/>
    </location>
</feature>
<feature type="sequence variant" id="VAR_055815" description="In dbSNP:rs17003166.">
    <original>T</original>
    <variation>M</variation>
    <location>
        <position position="954"/>
    </location>
</feature>
<feature type="sequence variant" id="VAR_055816" description="In dbSNP:rs17459809.">
    <original>G</original>
    <variation>E</variation>
    <location>
        <position position="1023"/>
    </location>
</feature>
<feature type="sequence variant" id="VAR_055817" description="In dbSNP:rs12512164.">
    <original>E</original>
    <variation>K</variation>
    <location>
        <position position="1136"/>
    </location>
</feature>
<feature type="sequence variant" id="VAR_055818" description="In dbSNP:rs17003213.">
    <original>A</original>
    <variation>V</variation>
    <location>
        <position position="1626"/>
    </location>
</feature>
<feature type="sequence variant" id="VAR_069153" description="In dbSNP:rs4388111.">
    <original>D</original>
    <variation>N</variation>
    <location>
        <position position="2545"/>
    </location>
</feature>
<proteinExistence type="evidence at protein level"/>
<gene>
    <name evidence="14" type="primary">FRAS1</name>
    <name type="synonym">KIAA1500</name>
</gene>
<protein>
    <recommendedName>
        <fullName evidence="2">Extracellular matrix organizing protein FRAS1</fullName>
    </recommendedName>
    <alternativeName>
        <fullName evidence="9">Fraser syndrome 1 protein</fullName>
    </alternativeName>
</protein>
<evidence type="ECO:0000250" key="1"/>
<evidence type="ECO:0000250" key="2">
    <source>
        <dbReference type="UniProtKB" id="Q80T14"/>
    </source>
</evidence>
<evidence type="ECO:0000255" key="3"/>
<evidence type="ECO:0000255" key="4">
    <source>
        <dbReference type="PROSITE-ProRule" id="PRU00220"/>
    </source>
</evidence>
<evidence type="ECO:0000255" key="5">
    <source>
        <dbReference type="PROSITE-ProRule" id="PRU01201"/>
    </source>
</evidence>
<evidence type="ECO:0000269" key="6">
    <source>
    </source>
</evidence>
<evidence type="ECO:0000269" key="7">
    <source>
    </source>
</evidence>
<evidence type="ECO:0000303" key="8">
    <source>
    </source>
</evidence>
<evidence type="ECO:0000303" key="9">
    <source>
    </source>
</evidence>
<evidence type="ECO:0000303" key="10">
    <source>
    </source>
</evidence>
<evidence type="ECO:0000303" key="11">
    <source>
    </source>
</evidence>
<evidence type="ECO:0000303" key="12">
    <source>
    </source>
</evidence>
<evidence type="ECO:0000305" key="13"/>
<evidence type="ECO:0000312" key="14">
    <source>
        <dbReference type="HGNC" id="HGNC:19185"/>
    </source>
</evidence>
<evidence type="ECO:0007744" key="15">
    <source>
    </source>
</evidence>